<name>RPOA_PSEPF</name>
<dbReference type="EC" id="2.7.7.6" evidence="1"/>
<dbReference type="EMBL" id="CP000094">
    <property type="protein sequence ID" value="ABA76792.1"/>
    <property type="molecule type" value="Genomic_DNA"/>
</dbReference>
<dbReference type="RefSeq" id="WP_003186012.1">
    <property type="nucleotide sequence ID" value="NC_007492.2"/>
</dbReference>
<dbReference type="SMR" id="Q3K612"/>
<dbReference type="GeneID" id="98285413"/>
<dbReference type="KEGG" id="pfo:Pfl01_5055"/>
<dbReference type="eggNOG" id="COG0202">
    <property type="taxonomic scope" value="Bacteria"/>
</dbReference>
<dbReference type="HOGENOM" id="CLU_053084_0_1_6"/>
<dbReference type="Proteomes" id="UP000002704">
    <property type="component" value="Chromosome"/>
</dbReference>
<dbReference type="GO" id="GO:0005737">
    <property type="term" value="C:cytoplasm"/>
    <property type="evidence" value="ECO:0007669"/>
    <property type="project" value="UniProtKB-ARBA"/>
</dbReference>
<dbReference type="GO" id="GO:0000428">
    <property type="term" value="C:DNA-directed RNA polymerase complex"/>
    <property type="evidence" value="ECO:0007669"/>
    <property type="project" value="UniProtKB-KW"/>
</dbReference>
<dbReference type="GO" id="GO:0003677">
    <property type="term" value="F:DNA binding"/>
    <property type="evidence" value="ECO:0007669"/>
    <property type="project" value="UniProtKB-UniRule"/>
</dbReference>
<dbReference type="GO" id="GO:0003899">
    <property type="term" value="F:DNA-directed RNA polymerase activity"/>
    <property type="evidence" value="ECO:0007669"/>
    <property type="project" value="UniProtKB-UniRule"/>
</dbReference>
<dbReference type="GO" id="GO:0046983">
    <property type="term" value="F:protein dimerization activity"/>
    <property type="evidence" value="ECO:0007669"/>
    <property type="project" value="InterPro"/>
</dbReference>
<dbReference type="GO" id="GO:0006351">
    <property type="term" value="P:DNA-templated transcription"/>
    <property type="evidence" value="ECO:0007669"/>
    <property type="project" value="UniProtKB-UniRule"/>
</dbReference>
<dbReference type="CDD" id="cd06928">
    <property type="entry name" value="RNAP_alpha_NTD"/>
    <property type="match status" value="1"/>
</dbReference>
<dbReference type="FunFam" id="1.10.150.20:FF:000001">
    <property type="entry name" value="DNA-directed RNA polymerase subunit alpha"/>
    <property type="match status" value="1"/>
</dbReference>
<dbReference type="FunFam" id="2.170.120.12:FF:000001">
    <property type="entry name" value="DNA-directed RNA polymerase subunit alpha"/>
    <property type="match status" value="1"/>
</dbReference>
<dbReference type="Gene3D" id="1.10.150.20">
    <property type="entry name" value="5' to 3' exonuclease, C-terminal subdomain"/>
    <property type="match status" value="1"/>
</dbReference>
<dbReference type="Gene3D" id="2.170.120.12">
    <property type="entry name" value="DNA-directed RNA polymerase, insert domain"/>
    <property type="match status" value="1"/>
</dbReference>
<dbReference type="Gene3D" id="3.30.1360.10">
    <property type="entry name" value="RNA polymerase, RBP11-like subunit"/>
    <property type="match status" value="1"/>
</dbReference>
<dbReference type="HAMAP" id="MF_00059">
    <property type="entry name" value="RNApol_bact_RpoA"/>
    <property type="match status" value="1"/>
</dbReference>
<dbReference type="InterPro" id="IPR011262">
    <property type="entry name" value="DNA-dir_RNA_pol_insert"/>
</dbReference>
<dbReference type="InterPro" id="IPR011263">
    <property type="entry name" value="DNA-dir_RNA_pol_RpoA/D/Rpb3"/>
</dbReference>
<dbReference type="InterPro" id="IPR011773">
    <property type="entry name" value="DNA-dir_RpoA"/>
</dbReference>
<dbReference type="InterPro" id="IPR036603">
    <property type="entry name" value="RBP11-like"/>
</dbReference>
<dbReference type="InterPro" id="IPR011260">
    <property type="entry name" value="RNAP_asu_C"/>
</dbReference>
<dbReference type="InterPro" id="IPR036643">
    <property type="entry name" value="RNApol_insert_sf"/>
</dbReference>
<dbReference type="NCBIfam" id="NF003513">
    <property type="entry name" value="PRK05182.1-2"/>
    <property type="match status" value="1"/>
</dbReference>
<dbReference type="NCBIfam" id="NF003519">
    <property type="entry name" value="PRK05182.2-5"/>
    <property type="match status" value="1"/>
</dbReference>
<dbReference type="NCBIfam" id="TIGR02027">
    <property type="entry name" value="rpoA"/>
    <property type="match status" value="1"/>
</dbReference>
<dbReference type="Pfam" id="PF01000">
    <property type="entry name" value="RNA_pol_A_bac"/>
    <property type="match status" value="1"/>
</dbReference>
<dbReference type="Pfam" id="PF03118">
    <property type="entry name" value="RNA_pol_A_CTD"/>
    <property type="match status" value="1"/>
</dbReference>
<dbReference type="Pfam" id="PF01193">
    <property type="entry name" value="RNA_pol_L"/>
    <property type="match status" value="1"/>
</dbReference>
<dbReference type="SMART" id="SM00662">
    <property type="entry name" value="RPOLD"/>
    <property type="match status" value="1"/>
</dbReference>
<dbReference type="SUPFAM" id="SSF47789">
    <property type="entry name" value="C-terminal domain of RNA polymerase alpha subunit"/>
    <property type="match status" value="1"/>
</dbReference>
<dbReference type="SUPFAM" id="SSF56553">
    <property type="entry name" value="Insert subdomain of RNA polymerase alpha subunit"/>
    <property type="match status" value="1"/>
</dbReference>
<dbReference type="SUPFAM" id="SSF55257">
    <property type="entry name" value="RBP11-like subunits of RNA polymerase"/>
    <property type="match status" value="1"/>
</dbReference>
<reference key="1">
    <citation type="journal article" date="2009" name="Genome Biol.">
        <title>Genomic and genetic analyses of diversity and plant interactions of Pseudomonas fluorescens.</title>
        <authorList>
            <person name="Silby M.W."/>
            <person name="Cerdeno-Tarraga A.M."/>
            <person name="Vernikos G.S."/>
            <person name="Giddens S.R."/>
            <person name="Jackson R.W."/>
            <person name="Preston G.M."/>
            <person name="Zhang X.-X."/>
            <person name="Moon C.D."/>
            <person name="Gehrig S.M."/>
            <person name="Godfrey S.A.C."/>
            <person name="Knight C.G."/>
            <person name="Malone J.G."/>
            <person name="Robinson Z."/>
            <person name="Spiers A.J."/>
            <person name="Harris S."/>
            <person name="Challis G.L."/>
            <person name="Yaxley A.M."/>
            <person name="Harris D."/>
            <person name="Seeger K."/>
            <person name="Murphy L."/>
            <person name="Rutter S."/>
            <person name="Squares R."/>
            <person name="Quail M.A."/>
            <person name="Saunders E."/>
            <person name="Mavromatis K."/>
            <person name="Brettin T.S."/>
            <person name="Bentley S.D."/>
            <person name="Hothersall J."/>
            <person name="Stephens E."/>
            <person name="Thomas C.M."/>
            <person name="Parkhill J."/>
            <person name="Levy S.B."/>
            <person name="Rainey P.B."/>
            <person name="Thomson N.R."/>
        </authorList>
    </citation>
    <scope>NUCLEOTIDE SEQUENCE [LARGE SCALE GENOMIC DNA]</scope>
    <source>
        <strain>Pf0-1</strain>
    </source>
</reference>
<sequence length="333" mass="36632">MQISVNEFLTPRHIDVQVVSPTRAKITLEPLERGFGHTLGNALRRILLSSMPGCAVVEAEIDGVLHEYSAIEGVQEDVIEILLNLKGLAIKLHGRDEVTLTLSKKGSGVVTAADIQLDHDVEIVNPDHVIANLASNGALNMKLTVARGRGYEPADSRQSDEDESRSIGRLQLDSSFSPVRRIAYVVENARVEQRTNLDKLVIDLETNGTLDPEEAIRRAATILQQQLAAFVDLKGDSEPVVVEQEDEIDPILLRPVDDLELTVRSANCLKAENIYYIGDLIQRTEVELLKTPNLGKKSLTEIKDVLASRGLSLGMRLDNWPPASLKKDDKATA</sequence>
<feature type="chain" id="PRO_0000225292" description="DNA-directed RNA polymerase subunit alpha">
    <location>
        <begin position="1"/>
        <end position="333"/>
    </location>
</feature>
<feature type="region of interest" description="Alpha N-terminal domain (alpha-NTD)" evidence="1">
    <location>
        <begin position="1"/>
        <end position="234"/>
    </location>
</feature>
<feature type="region of interest" description="Alpha C-terminal domain (alpha-CTD)" evidence="1">
    <location>
        <begin position="248"/>
        <end position="333"/>
    </location>
</feature>
<protein>
    <recommendedName>
        <fullName evidence="1">DNA-directed RNA polymerase subunit alpha</fullName>
        <shortName evidence="1">RNAP subunit alpha</shortName>
        <ecNumber evidence="1">2.7.7.6</ecNumber>
    </recommendedName>
    <alternativeName>
        <fullName evidence="1">RNA polymerase subunit alpha</fullName>
    </alternativeName>
    <alternativeName>
        <fullName evidence="1">Transcriptase subunit alpha</fullName>
    </alternativeName>
</protein>
<gene>
    <name evidence="1" type="primary">rpoA</name>
    <name type="ordered locus">Pfl01_5055</name>
</gene>
<evidence type="ECO:0000255" key="1">
    <source>
        <dbReference type="HAMAP-Rule" id="MF_00059"/>
    </source>
</evidence>
<accession>Q3K612</accession>
<proteinExistence type="inferred from homology"/>
<keyword id="KW-0240">DNA-directed RNA polymerase</keyword>
<keyword id="KW-0548">Nucleotidyltransferase</keyword>
<keyword id="KW-0804">Transcription</keyword>
<keyword id="KW-0808">Transferase</keyword>
<organism>
    <name type="scientific">Pseudomonas fluorescens (strain Pf0-1)</name>
    <dbReference type="NCBI Taxonomy" id="205922"/>
    <lineage>
        <taxon>Bacteria</taxon>
        <taxon>Pseudomonadati</taxon>
        <taxon>Pseudomonadota</taxon>
        <taxon>Gammaproteobacteria</taxon>
        <taxon>Pseudomonadales</taxon>
        <taxon>Pseudomonadaceae</taxon>
        <taxon>Pseudomonas</taxon>
    </lineage>
</organism>
<comment type="function">
    <text evidence="1">DNA-dependent RNA polymerase catalyzes the transcription of DNA into RNA using the four ribonucleoside triphosphates as substrates.</text>
</comment>
<comment type="catalytic activity">
    <reaction evidence="1">
        <text>RNA(n) + a ribonucleoside 5'-triphosphate = RNA(n+1) + diphosphate</text>
        <dbReference type="Rhea" id="RHEA:21248"/>
        <dbReference type="Rhea" id="RHEA-COMP:14527"/>
        <dbReference type="Rhea" id="RHEA-COMP:17342"/>
        <dbReference type="ChEBI" id="CHEBI:33019"/>
        <dbReference type="ChEBI" id="CHEBI:61557"/>
        <dbReference type="ChEBI" id="CHEBI:140395"/>
        <dbReference type="EC" id="2.7.7.6"/>
    </reaction>
</comment>
<comment type="subunit">
    <text evidence="1">Homodimer. The RNAP catalytic core consists of 2 alpha, 1 beta, 1 beta' and 1 omega subunit. When a sigma factor is associated with the core the holoenzyme is formed, which can initiate transcription.</text>
</comment>
<comment type="domain">
    <text evidence="1">The N-terminal domain is essential for RNAP assembly and basal transcription, whereas the C-terminal domain is involved in interaction with transcriptional regulators and with upstream promoter elements.</text>
</comment>
<comment type="similarity">
    <text evidence="1">Belongs to the RNA polymerase alpha chain family.</text>
</comment>